<name>NU4LM_DEBHA</name>
<organism>
    <name type="scientific">Debaryomyces hansenii (strain ATCC 36239 / CBS 767 / BCRC 21394 / JCM 1990 / NBRC 0083 / IGC 2968)</name>
    <name type="common">Yeast</name>
    <name type="synonym">Torulaspora hansenii</name>
    <dbReference type="NCBI Taxonomy" id="284592"/>
    <lineage>
        <taxon>Eukaryota</taxon>
        <taxon>Fungi</taxon>
        <taxon>Dikarya</taxon>
        <taxon>Ascomycota</taxon>
        <taxon>Saccharomycotina</taxon>
        <taxon>Pichiomycetes</taxon>
        <taxon>Debaryomycetaceae</taxon>
        <taxon>Debaryomyces</taxon>
    </lineage>
</organism>
<feature type="chain" id="PRO_0000355056" description="NADH-ubiquinone oxidoreductase chain 4L">
    <location>
        <begin position="1"/>
        <end position="84"/>
    </location>
</feature>
<feature type="transmembrane region" description="Helical" evidence="2">
    <location>
        <begin position="18"/>
        <end position="38"/>
    </location>
</feature>
<feature type="transmembrane region" description="Helical" evidence="2">
    <location>
        <begin position="51"/>
        <end position="71"/>
    </location>
</feature>
<gene>
    <name type="primary">ND4L</name>
    <name type="synonym">NAD4L</name>
</gene>
<dbReference type="EC" id="7.1.1.2"/>
<dbReference type="EMBL" id="DQ508940">
    <property type="protein sequence ID" value="ABF58072.1"/>
    <property type="molecule type" value="Genomic_DNA"/>
</dbReference>
<dbReference type="RefSeq" id="YP_001621423.1">
    <property type="nucleotide sequence ID" value="NC_010166.1"/>
</dbReference>
<dbReference type="SMR" id="A9RAH1"/>
<dbReference type="STRING" id="284592.A9RAH1"/>
<dbReference type="GeneID" id="5845846"/>
<dbReference type="KEGG" id="dha:ND4L"/>
<dbReference type="InParanoid" id="A9RAH1"/>
<dbReference type="Proteomes" id="UP000000599">
    <property type="component" value="Mitochondrion"/>
</dbReference>
<dbReference type="GO" id="GO:0031966">
    <property type="term" value="C:mitochondrial membrane"/>
    <property type="evidence" value="ECO:0007669"/>
    <property type="project" value="UniProtKB-SubCell"/>
</dbReference>
<dbReference type="GO" id="GO:0030964">
    <property type="term" value="C:NADH dehydrogenase complex"/>
    <property type="evidence" value="ECO:0007669"/>
    <property type="project" value="TreeGrafter"/>
</dbReference>
<dbReference type="GO" id="GO:0008137">
    <property type="term" value="F:NADH dehydrogenase (ubiquinone) activity"/>
    <property type="evidence" value="ECO:0007669"/>
    <property type="project" value="UniProtKB-EC"/>
</dbReference>
<dbReference type="GO" id="GO:0042773">
    <property type="term" value="P:ATP synthesis coupled electron transport"/>
    <property type="evidence" value="ECO:0007669"/>
    <property type="project" value="InterPro"/>
</dbReference>
<dbReference type="FunFam" id="1.10.287.3510:FF:000011">
    <property type="entry name" value="NADH-ubiquinone oxidoreductase chain 4L"/>
    <property type="match status" value="1"/>
</dbReference>
<dbReference type="Gene3D" id="1.10.287.3510">
    <property type="match status" value="1"/>
</dbReference>
<dbReference type="InterPro" id="IPR001133">
    <property type="entry name" value="NADH_UbQ_OxRdtase_chain4L/K"/>
</dbReference>
<dbReference type="InterPro" id="IPR039428">
    <property type="entry name" value="NUOK/Mnh_C1-like"/>
</dbReference>
<dbReference type="PANTHER" id="PTHR11434:SF16">
    <property type="entry name" value="NADH-UBIQUINONE OXIDOREDUCTASE CHAIN 4L"/>
    <property type="match status" value="1"/>
</dbReference>
<dbReference type="PANTHER" id="PTHR11434">
    <property type="entry name" value="NADH-UBIQUINONE OXIDOREDUCTASE SUBUNIT ND4L"/>
    <property type="match status" value="1"/>
</dbReference>
<dbReference type="Pfam" id="PF00420">
    <property type="entry name" value="Oxidored_q2"/>
    <property type="match status" value="1"/>
</dbReference>
<accession>A9RAH1</accession>
<sequence length="84" mass="9307">MIAMFTTLLMFYVSQNNIISLLIAIEILLLTVTVKIIYLGGQFDDVQSTMFALFIITLAGAESAIGLSLLVSYYRLRGKVTNIL</sequence>
<evidence type="ECO:0000250" key="1"/>
<evidence type="ECO:0000255" key="2"/>
<evidence type="ECO:0000305" key="3"/>
<keyword id="KW-0249">Electron transport</keyword>
<keyword id="KW-0472">Membrane</keyword>
<keyword id="KW-0496">Mitochondrion</keyword>
<keyword id="KW-0520">NAD</keyword>
<keyword id="KW-1185">Reference proteome</keyword>
<keyword id="KW-0679">Respiratory chain</keyword>
<keyword id="KW-1278">Translocase</keyword>
<keyword id="KW-0812">Transmembrane</keyword>
<keyword id="KW-1133">Transmembrane helix</keyword>
<keyword id="KW-0813">Transport</keyword>
<keyword id="KW-0830">Ubiquinone</keyword>
<geneLocation type="mitochondrion"/>
<protein>
    <recommendedName>
        <fullName>NADH-ubiquinone oxidoreductase chain 4L</fullName>
        <ecNumber>7.1.1.2</ecNumber>
    </recommendedName>
    <alternativeName>
        <fullName>NADH dehydrogenase subunit 4L</fullName>
    </alternativeName>
</protein>
<reference key="1">
    <citation type="journal article" date="2008" name="FEMS Yeast Res.">
        <title>Promiscuous DNA in the nuclear genomes of hemiascomycetous yeasts.</title>
        <authorList>
            <person name="Sacerdot C."/>
            <person name="Casaregola S."/>
            <person name="Lafontaine I."/>
            <person name="Tekaia F."/>
            <person name="Dujon B."/>
            <person name="Ozier-Kalogeropoulos O."/>
        </authorList>
    </citation>
    <scope>NUCLEOTIDE SEQUENCE [LARGE SCALE GENOMIC DNA]</scope>
    <source>
        <strain>ATCC 36239 / CBS 767 / BCRC 21394 / JCM 1990 / NBRC 0083 / IGC 2968</strain>
    </source>
</reference>
<comment type="function">
    <text evidence="1">Core subunit of the mitochondrial membrane respiratory chain NADH dehydrogenase (Complex I) that is believed to belong to the minimal assembly required for catalysis. Complex I functions in the transfer of electrons from NADH to the respiratory chain. The immediate electron acceptor for the enzyme is believed to be ubiquinone (By similarity).</text>
</comment>
<comment type="catalytic activity">
    <reaction>
        <text>a ubiquinone + NADH + 5 H(+)(in) = a ubiquinol + NAD(+) + 4 H(+)(out)</text>
        <dbReference type="Rhea" id="RHEA:29091"/>
        <dbReference type="Rhea" id="RHEA-COMP:9565"/>
        <dbReference type="Rhea" id="RHEA-COMP:9566"/>
        <dbReference type="ChEBI" id="CHEBI:15378"/>
        <dbReference type="ChEBI" id="CHEBI:16389"/>
        <dbReference type="ChEBI" id="CHEBI:17976"/>
        <dbReference type="ChEBI" id="CHEBI:57540"/>
        <dbReference type="ChEBI" id="CHEBI:57945"/>
        <dbReference type="EC" id="7.1.1.2"/>
    </reaction>
</comment>
<comment type="subcellular location">
    <subcellularLocation>
        <location evidence="1">Mitochondrion membrane</location>
        <topology evidence="1">Multi-pass membrane protein</topology>
    </subcellularLocation>
</comment>
<comment type="similarity">
    <text evidence="3">Belongs to the complex I subunit 4L family.</text>
</comment>
<proteinExistence type="inferred from homology"/>